<protein>
    <recommendedName>
        <fullName evidence="9">Adhesion G protein-coupled receptor E3</fullName>
    </recommendedName>
    <alternativeName>
        <fullName>EGF-like module receptor 3</fullName>
    </alternativeName>
    <alternativeName>
        <fullName>EGF-like module-containing mucin-like hormone receptor-like 3</fullName>
    </alternativeName>
</protein>
<reference key="1">
    <citation type="journal article" date="2001" name="J. Biol. Chem.">
        <title>Human epidermal growth factor (EGF) module-containing mucin-like hormone receptor 3 is a new member of the EGF-TM7 family that recognizes a ligand on human macrophages and activated neutrophils.</title>
        <authorList>
            <person name="Stacey M."/>
            <person name="Lin H.-H."/>
            <person name="Hilyard K.L."/>
            <person name="Gordon S."/>
            <person name="McKnight A.J."/>
        </authorList>
    </citation>
    <scope>NUCLEOTIDE SEQUENCE [MRNA] (ISOFORMS 1 AND 3)</scope>
    <scope>VARIANT GLN-385</scope>
    <scope>TISSUE SPECIFICITY</scope>
    <scope>FUNCTION</scope>
</reference>
<reference key="2">
    <citation type="journal article" date="2003" name="Genome Res.">
        <title>The secreted protein discovery initiative (SPDI), a large-scale effort to identify novel human secreted and transmembrane proteins: a bioinformatics assessment.</title>
        <authorList>
            <person name="Clark H.F."/>
            <person name="Gurney A.L."/>
            <person name="Abaya E."/>
            <person name="Baker K."/>
            <person name="Baldwin D.T."/>
            <person name="Brush J."/>
            <person name="Chen J."/>
            <person name="Chow B."/>
            <person name="Chui C."/>
            <person name="Crowley C."/>
            <person name="Currell B."/>
            <person name="Deuel B."/>
            <person name="Dowd P."/>
            <person name="Eaton D."/>
            <person name="Foster J.S."/>
            <person name="Grimaldi C."/>
            <person name="Gu Q."/>
            <person name="Hass P.E."/>
            <person name="Heldens S."/>
            <person name="Huang A."/>
            <person name="Kim H.S."/>
            <person name="Klimowski L."/>
            <person name="Jin Y."/>
            <person name="Johnson S."/>
            <person name="Lee J."/>
            <person name="Lewis L."/>
            <person name="Liao D."/>
            <person name="Mark M.R."/>
            <person name="Robbie E."/>
            <person name="Sanchez C."/>
            <person name="Schoenfeld J."/>
            <person name="Seshagiri S."/>
            <person name="Simmons L."/>
            <person name="Singh J."/>
            <person name="Smith V."/>
            <person name="Stinson J."/>
            <person name="Vagts A."/>
            <person name="Vandlen R.L."/>
            <person name="Watanabe C."/>
            <person name="Wieand D."/>
            <person name="Woods K."/>
            <person name="Xie M.-H."/>
            <person name="Yansura D.G."/>
            <person name="Yi S."/>
            <person name="Yu G."/>
            <person name="Yuan J."/>
            <person name="Zhang M."/>
            <person name="Zhang Z."/>
            <person name="Goddard A.D."/>
            <person name="Wood W.I."/>
            <person name="Godowski P.J."/>
            <person name="Gray A.M."/>
        </authorList>
    </citation>
    <scope>NUCLEOTIDE SEQUENCE [LARGE SCALE MRNA] (ISOFORM 2)</scope>
    <scope>VARIANTS GLN-127 AND GLN-385</scope>
</reference>
<reference key="3">
    <citation type="journal article" date="2004" name="Nature">
        <title>The DNA sequence and biology of human chromosome 19.</title>
        <authorList>
            <person name="Grimwood J."/>
            <person name="Gordon L.A."/>
            <person name="Olsen A.S."/>
            <person name="Terry A."/>
            <person name="Schmutz J."/>
            <person name="Lamerdin J.E."/>
            <person name="Hellsten U."/>
            <person name="Goodstein D."/>
            <person name="Couronne O."/>
            <person name="Tran-Gyamfi M."/>
            <person name="Aerts A."/>
            <person name="Altherr M."/>
            <person name="Ashworth L."/>
            <person name="Bajorek E."/>
            <person name="Black S."/>
            <person name="Branscomb E."/>
            <person name="Caenepeel S."/>
            <person name="Carrano A.V."/>
            <person name="Caoile C."/>
            <person name="Chan Y.M."/>
            <person name="Christensen M."/>
            <person name="Cleland C.A."/>
            <person name="Copeland A."/>
            <person name="Dalin E."/>
            <person name="Dehal P."/>
            <person name="Denys M."/>
            <person name="Detter J.C."/>
            <person name="Escobar J."/>
            <person name="Flowers D."/>
            <person name="Fotopulos D."/>
            <person name="Garcia C."/>
            <person name="Georgescu A.M."/>
            <person name="Glavina T."/>
            <person name="Gomez M."/>
            <person name="Gonzales E."/>
            <person name="Groza M."/>
            <person name="Hammon N."/>
            <person name="Hawkins T."/>
            <person name="Haydu L."/>
            <person name="Ho I."/>
            <person name="Huang W."/>
            <person name="Israni S."/>
            <person name="Jett J."/>
            <person name="Kadner K."/>
            <person name="Kimball H."/>
            <person name="Kobayashi A."/>
            <person name="Larionov V."/>
            <person name="Leem S.-H."/>
            <person name="Lopez F."/>
            <person name="Lou Y."/>
            <person name="Lowry S."/>
            <person name="Malfatti S."/>
            <person name="Martinez D."/>
            <person name="McCready P.M."/>
            <person name="Medina C."/>
            <person name="Morgan J."/>
            <person name="Nelson K."/>
            <person name="Nolan M."/>
            <person name="Ovcharenko I."/>
            <person name="Pitluck S."/>
            <person name="Pollard M."/>
            <person name="Popkie A.P."/>
            <person name="Predki P."/>
            <person name="Quan G."/>
            <person name="Ramirez L."/>
            <person name="Rash S."/>
            <person name="Retterer J."/>
            <person name="Rodriguez A."/>
            <person name="Rogers S."/>
            <person name="Salamov A."/>
            <person name="Salazar A."/>
            <person name="She X."/>
            <person name="Smith D."/>
            <person name="Slezak T."/>
            <person name="Solovyev V."/>
            <person name="Thayer N."/>
            <person name="Tice H."/>
            <person name="Tsai M."/>
            <person name="Ustaszewska A."/>
            <person name="Vo N."/>
            <person name="Wagner M."/>
            <person name="Wheeler J."/>
            <person name="Wu K."/>
            <person name="Xie G."/>
            <person name="Yang J."/>
            <person name="Dubchak I."/>
            <person name="Furey T.S."/>
            <person name="DeJong P."/>
            <person name="Dickson M."/>
            <person name="Gordon D."/>
            <person name="Eichler E.E."/>
            <person name="Pennacchio L.A."/>
            <person name="Richardson P."/>
            <person name="Stubbs L."/>
            <person name="Rokhsar D.S."/>
            <person name="Myers R.M."/>
            <person name="Rubin E.M."/>
            <person name="Lucas S.M."/>
        </authorList>
    </citation>
    <scope>NUCLEOTIDE SEQUENCE [LARGE SCALE GENOMIC DNA]</scope>
</reference>
<reference key="4">
    <citation type="journal article" date="2015" name="Pharmacol. Rev.">
        <title>International union of basic and clinical pharmacology. XCIV. Adhesion G protein-coupled receptors.</title>
        <authorList>
            <person name="Hamann J."/>
            <person name="Aust G."/>
            <person name="Arac D."/>
            <person name="Engel F.B."/>
            <person name="Formstone C."/>
            <person name="Fredriksson R."/>
            <person name="Hall R.A."/>
            <person name="Harty B.L."/>
            <person name="Kirchhoff C."/>
            <person name="Knapp B."/>
            <person name="Krishnan A."/>
            <person name="Liebscher I."/>
            <person name="Lin H.H."/>
            <person name="Martinelli D.C."/>
            <person name="Monk K.R."/>
            <person name="Peeters M.C."/>
            <person name="Piao X."/>
            <person name="Promel S."/>
            <person name="Schoneberg T."/>
            <person name="Schwartz T.W."/>
            <person name="Singer K."/>
            <person name="Stacey M."/>
            <person name="Ushkaryov Y.A."/>
            <person name="Vallon M."/>
            <person name="Wolfrum U."/>
            <person name="Wright M.W."/>
            <person name="Xu L."/>
            <person name="Langenhan T."/>
            <person name="Schioth H.B."/>
        </authorList>
    </citation>
    <scope>NOMENCLATURE</scope>
</reference>
<gene>
    <name evidence="11" type="primary">ADGRE3</name>
    <name type="synonym">EMR3</name>
    <name type="ORF">UNQ683/PRO1562</name>
</gene>
<name>AGRE3_HUMAN</name>
<keyword id="KW-0025">Alternative splicing</keyword>
<keyword id="KW-0106">Calcium</keyword>
<keyword id="KW-1003">Cell membrane</keyword>
<keyword id="KW-1015">Disulfide bond</keyword>
<keyword id="KW-0245">EGF-like domain</keyword>
<keyword id="KW-0297">G-protein coupled receptor</keyword>
<keyword id="KW-0325">Glycoprotein</keyword>
<keyword id="KW-0472">Membrane</keyword>
<keyword id="KW-1267">Proteomics identification</keyword>
<keyword id="KW-0675">Receptor</keyword>
<keyword id="KW-1185">Reference proteome</keyword>
<keyword id="KW-0677">Repeat</keyword>
<keyword id="KW-0964">Secreted</keyword>
<keyword id="KW-0732">Signal</keyword>
<keyword id="KW-0807">Transducer</keyword>
<keyword id="KW-0812">Transmembrane</keyword>
<keyword id="KW-1133">Transmembrane helix</keyword>
<proteinExistence type="evidence at protein level"/>
<accession>Q9BY15</accession>
<sequence length="652" mass="72621">MQGPLLLPGLCFLLSLFGAVTQKTKTSCAKCPPNASCVNNTHCTCNHGYTSGSGQKLFTFPLETCNDINECTPPYSVYCGFNAVCYNVEGSFYCQCVPGYRLHSGNEQFSNSNENTCQDTTSSKTTEGRKELQKIVDKFESLLTNQTLWRTEGRQEISSTATTILRDVESKVLETALKDPEQKVLKIQNDSVAIETQAITDNCSEERKTFNLNVQMNSMDIRCSDIIQGDTQGPSAIAFISYSSLGNIINATFFEEMDKKDQVYLNSQVVSAAIGPKRNVSLSKSVTLTFQHVKMTPSTKKVFCVYWKSTGQGSQWSRDGCFLIHVNKSHTMCNCSHLSSFAVLMALTSQEEDPVLTVITYVGLSVSLLCLLLAALTFLLCKAIRNTSTSLHLQLSLCLFLAHLLFLVGIDRTEPKVLCSIIAGALHYLYLAAFTWMLLEGVHLFLTARNLTVVNYSSINRLMKWIMFPVGYGVPAVTVAISAASWPHLYGTADRCWLHLDQGFMWSFLGPVCAIFSANLVLFILVFWILKRKLSSLNSEVSTIQNTRMLAFKATAQLFILGCTWCLGLLQVGPAAQVMAYLFTIINSLQGFFIFLVYCLLSQQVQKQYQKWFREIVKSKSESETYTLSSKMGPDSKPSEGDVFPGQVKRKY</sequence>
<comment type="function">
    <text evidence="6">Orphan receptor that may play a role myeloid-myeloid interactions during immune and inflammatory responses. A ligand for the soluble form of this receptor is present at the surface of monocytes-derived macrophages and activated neutrophils.</text>
</comment>
<comment type="subunit">
    <text evidence="1">Forms a heterodimer, consisting of a large extracellular region (alpha subunit) non-covalently linked to a seven-transmembrane moiety (beta subunit).</text>
</comment>
<comment type="subcellular location">
    <subcellularLocation>
        <location>Cell membrane</location>
        <topology evidence="2">Multi-pass membrane protein</topology>
    </subcellularLocation>
</comment>
<comment type="subcellular location">
    <molecule>Isoform 3</molecule>
    <subcellularLocation>
        <location>Secreted</location>
    </subcellularLocation>
</comment>
<comment type="alternative products">
    <event type="alternative splicing"/>
    <isoform>
        <id>Q9BY15-1</id>
        <name>1</name>
        <sequence type="displayed"/>
    </isoform>
    <isoform>
        <id>Q9BY15-2</id>
        <name>2</name>
        <sequence type="described" ref="VSP_009417"/>
    </isoform>
    <isoform>
        <id>Q9BY15-3</id>
        <name>3</name>
        <sequence type="described" ref="VSP_009418"/>
    </isoform>
</comment>
<comment type="tissue specificity">
    <text evidence="6">Displays a predominantly leukocyte-restricted expression, with highest levels in neutrophils, monocytes and macrophages.</text>
</comment>
<comment type="PTM">
    <text evidence="1">Proteolytically cleaved into 2 subunits, an extracellular alpha subunit and a seven-transmembrane subunit.</text>
</comment>
<comment type="miscellaneous">
    <text evidence="10">Has no murine ortholog.</text>
</comment>
<comment type="miscellaneous">
    <molecule>Isoform 3</molecule>
    <text evidence="10">Due to a 40-nucleotide deletion (nucleotides 439-479) resulting in a frameshift leading to a premature stop codon and the production of a truncated soluble form.</text>
</comment>
<comment type="similarity">
    <text evidence="10">Belongs to the G-protein coupled receptor 2 family. Adhesion G-protein coupled receptor (ADGR) subfamily.</text>
</comment>
<organism>
    <name type="scientific">Homo sapiens</name>
    <name type="common">Human</name>
    <dbReference type="NCBI Taxonomy" id="9606"/>
    <lineage>
        <taxon>Eukaryota</taxon>
        <taxon>Metazoa</taxon>
        <taxon>Chordata</taxon>
        <taxon>Craniata</taxon>
        <taxon>Vertebrata</taxon>
        <taxon>Euteleostomi</taxon>
        <taxon>Mammalia</taxon>
        <taxon>Eutheria</taxon>
        <taxon>Euarchontoglires</taxon>
        <taxon>Primates</taxon>
        <taxon>Haplorrhini</taxon>
        <taxon>Catarrhini</taxon>
        <taxon>Hominidae</taxon>
        <taxon>Homo</taxon>
    </lineage>
</organism>
<evidence type="ECO:0000250" key="1">
    <source>
        <dbReference type="UniProtKB" id="Q9UHX3"/>
    </source>
</evidence>
<evidence type="ECO:0000255" key="2"/>
<evidence type="ECO:0000255" key="3">
    <source>
        <dbReference type="PROSITE-ProRule" id="PRU00076"/>
    </source>
</evidence>
<evidence type="ECO:0000255" key="4">
    <source>
        <dbReference type="PROSITE-ProRule" id="PRU00098"/>
    </source>
</evidence>
<evidence type="ECO:0000256" key="5">
    <source>
        <dbReference type="SAM" id="MobiDB-lite"/>
    </source>
</evidence>
<evidence type="ECO:0000269" key="6">
    <source>
    </source>
</evidence>
<evidence type="ECO:0000269" key="7">
    <source>
    </source>
</evidence>
<evidence type="ECO:0000303" key="8">
    <source>
    </source>
</evidence>
<evidence type="ECO:0000303" key="9">
    <source>
    </source>
</evidence>
<evidence type="ECO:0000305" key="10"/>
<evidence type="ECO:0000312" key="11">
    <source>
        <dbReference type="HGNC" id="HGNC:23647"/>
    </source>
</evidence>
<feature type="signal peptide" evidence="2">
    <location>
        <begin position="1"/>
        <end position="21"/>
    </location>
</feature>
<feature type="chain" id="PRO_0000012876" description="Adhesion G protein-coupled receptor E3">
    <location>
        <begin position="22"/>
        <end position="652"/>
    </location>
</feature>
<feature type="topological domain" description="Extracellular" evidence="2">
    <location>
        <begin position="22"/>
        <end position="357"/>
    </location>
</feature>
<feature type="transmembrane region" description="Helical; Name=1" evidence="2">
    <location>
        <begin position="358"/>
        <end position="378"/>
    </location>
</feature>
<feature type="topological domain" description="Cytoplasmic" evidence="2">
    <location>
        <begin position="379"/>
        <end position="389"/>
    </location>
</feature>
<feature type="transmembrane region" description="Helical; Name=2" evidence="2">
    <location>
        <begin position="390"/>
        <end position="410"/>
    </location>
</feature>
<feature type="topological domain" description="Extracellular" evidence="2">
    <location>
        <begin position="411"/>
        <end position="416"/>
    </location>
</feature>
<feature type="transmembrane region" description="Helical; Name=3" evidence="2">
    <location>
        <begin position="417"/>
        <end position="437"/>
    </location>
</feature>
<feature type="topological domain" description="Cytoplasmic" evidence="2">
    <location>
        <begin position="438"/>
        <end position="464"/>
    </location>
</feature>
<feature type="transmembrane region" description="Helical; Name=4" evidence="2">
    <location>
        <begin position="465"/>
        <end position="485"/>
    </location>
</feature>
<feature type="topological domain" description="Extracellular" evidence="2">
    <location>
        <begin position="486"/>
        <end position="508"/>
    </location>
</feature>
<feature type="transmembrane region" description="Helical; Name=5" evidence="2">
    <location>
        <begin position="509"/>
        <end position="529"/>
    </location>
</feature>
<feature type="topological domain" description="Cytoplasmic" evidence="2">
    <location>
        <begin position="530"/>
        <end position="557"/>
    </location>
</feature>
<feature type="transmembrane region" description="Helical; Name=6" evidence="2">
    <location>
        <begin position="558"/>
        <end position="578"/>
    </location>
</feature>
<feature type="topological domain" description="Extracellular" evidence="2">
    <location>
        <begin position="579"/>
        <end position="580"/>
    </location>
</feature>
<feature type="transmembrane region" description="Helical; Name=7" evidence="2">
    <location>
        <begin position="581"/>
        <end position="601"/>
    </location>
</feature>
<feature type="topological domain" description="Cytoplasmic" evidence="2">
    <location>
        <begin position="602"/>
        <end position="652"/>
    </location>
</feature>
<feature type="domain" description="EGF-like 1" evidence="3">
    <location>
        <begin position="24"/>
        <end position="66"/>
    </location>
</feature>
<feature type="domain" description="EGF-like 2; calcium-binding" evidence="3">
    <location>
        <begin position="67"/>
        <end position="118"/>
    </location>
</feature>
<feature type="domain" description="GAIN-B" evidence="4">
    <location>
        <begin position="183"/>
        <end position="351"/>
    </location>
</feature>
<feature type="region of interest" description="GPS" evidence="4">
    <location>
        <begin position="304"/>
        <end position="351"/>
    </location>
</feature>
<feature type="region of interest" description="Disordered" evidence="5">
    <location>
        <begin position="621"/>
        <end position="652"/>
    </location>
</feature>
<feature type="site" description="Cleavage; by autolysis" evidence="4">
    <location>
        <begin position="338"/>
        <end position="339"/>
    </location>
</feature>
<feature type="glycosylation site" description="N-linked (GlcNAc...) asparagine" evidence="2">
    <location>
        <position position="34"/>
    </location>
</feature>
<feature type="glycosylation site" description="N-linked (GlcNAc...) asparagine" evidence="2">
    <location>
        <position position="39"/>
    </location>
</feature>
<feature type="glycosylation site" description="N-linked (GlcNAc...) asparagine" evidence="2">
    <location>
        <position position="145"/>
    </location>
</feature>
<feature type="glycosylation site" description="N-linked (GlcNAc...) asparagine" evidence="2">
    <location>
        <position position="189"/>
    </location>
</feature>
<feature type="glycosylation site" description="N-linked (GlcNAc...) asparagine" evidence="2">
    <location>
        <position position="202"/>
    </location>
</feature>
<feature type="glycosylation site" description="N-linked (GlcNAc...) asparagine" evidence="2">
    <location>
        <position position="250"/>
    </location>
</feature>
<feature type="glycosylation site" description="N-linked (GlcNAc...) asparagine" evidence="2">
    <location>
        <position position="279"/>
    </location>
</feature>
<feature type="glycosylation site" description="N-linked (GlcNAc...) asparagine" evidence="2">
    <location>
        <position position="327"/>
    </location>
</feature>
<feature type="glycosylation site" description="N-linked (GlcNAc...) asparagine" evidence="2">
    <location>
        <position position="334"/>
    </location>
</feature>
<feature type="disulfide bond" evidence="3">
    <location>
        <begin position="28"/>
        <end position="37"/>
    </location>
</feature>
<feature type="disulfide bond" evidence="3">
    <location>
        <begin position="31"/>
        <end position="43"/>
    </location>
</feature>
<feature type="disulfide bond" evidence="3">
    <location>
        <begin position="45"/>
        <end position="65"/>
    </location>
</feature>
<feature type="disulfide bond" evidence="3">
    <location>
        <begin position="71"/>
        <end position="85"/>
    </location>
</feature>
<feature type="disulfide bond" evidence="3">
    <location>
        <begin position="79"/>
        <end position="94"/>
    </location>
</feature>
<feature type="disulfide bond" evidence="3">
    <location>
        <begin position="96"/>
        <end position="117"/>
    </location>
</feature>
<feature type="disulfide bond" evidence="4">
    <location>
        <begin position="304"/>
        <end position="333"/>
    </location>
</feature>
<feature type="disulfide bond" evidence="4">
    <location>
        <begin position="321"/>
        <end position="335"/>
    </location>
</feature>
<feature type="splice variant" id="VSP_009417" description="In isoform 2." evidence="8">
    <location>
        <begin position="67"/>
        <end position="118"/>
    </location>
</feature>
<feature type="splice variant" id="VSP_009418" description="In isoform 3." evidence="10">
    <location>
        <begin position="118"/>
        <end position="652"/>
    </location>
</feature>
<feature type="sequence variant" id="VAR_024472" description="In dbSNP:rs4606855." evidence="7">
    <original>E</original>
    <variation>Q</variation>
    <location>
        <position position="127"/>
    </location>
</feature>
<feature type="sequence variant" id="VAR_055926" description="In dbSNP:rs34226397.">
    <original>A</original>
    <variation>V</variation>
    <location>
        <position position="236"/>
    </location>
</feature>
<feature type="sequence variant" id="VAR_060442" description="In dbSNP:rs45508602." evidence="6 7">
    <original>R</original>
    <variation>Q</variation>
    <location>
        <position position="385"/>
    </location>
</feature>
<dbReference type="EMBL" id="AF239764">
    <property type="protein sequence ID" value="AAK15076.1"/>
    <property type="molecule type" value="mRNA"/>
</dbReference>
<dbReference type="EMBL" id="AY358817">
    <property type="protein sequence ID" value="AAQ89176.1"/>
    <property type="molecule type" value="mRNA"/>
</dbReference>
<dbReference type="EMBL" id="AC022149">
    <property type="status" value="NOT_ANNOTATED_CDS"/>
    <property type="molecule type" value="Genomic_DNA"/>
</dbReference>
<dbReference type="EMBL" id="AC090427">
    <property type="status" value="NOT_ANNOTATED_CDS"/>
    <property type="molecule type" value="Genomic_DNA"/>
</dbReference>
<dbReference type="EMBL" id="AC135052">
    <property type="status" value="NOT_ANNOTATED_CDS"/>
    <property type="molecule type" value="Genomic_DNA"/>
</dbReference>
<dbReference type="CCDS" id="CCDS12315.1">
    <molecule id="Q9BY15-1"/>
</dbReference>
<dbReference type="CCDS" id="CCDS74297.1">
    <molecule id="Q9BY15-2"/>
</dbReference>
<dbReference type="RefSeq" id="NP_001276087.1">
    <molecule id="Q9BY15-2"/>
    <property type="nucleotide sequence ID" value="NM_001289158.2"/>
</dbReference>
<dbReference type="RefSeq" id="NP_001276088.1">
    <property type="nucleotide sequence ID" value="NM_001289159.1"/>
</dbReference>
<dbReference type="RefSeq" id="NP_115960.2">
    <molecule id="Q9BY15-1"/>
    <property type="nucleotide sequence ID" value="NM_032571.5"/>
</dbReference>
<dbReference type="SMR" id="Q9BY15"/>
<dbReference type="FunCoup" id="Q9BY15">
    <property type="interactions" value="77"/>
</dbReference>
<dbReference type="STRING" id="9606.ENSP00000253673"/>
<dbReference type="MEROPS" id="P02.003"/>
<dbReference type="GlyCosmos" id="Q9BY15">
    <property type="glycosylation" value="9 sites, No reported glycans"/>
</dbReference>
<dbReference type="GlyGen" id="Q9BY15">
    <property type="glycosylation" value="10 sites"/>
</dbReference>
<dbReference type="iPTMnet" id="Q9BY15"/>
<dbReference type="PhosphoSitePlus" id="Q9BY15"/>
<dbReference type="BioMuta" id="ADGRE3"/>
<dbReference type="DMDM" id="296434492"/>
<dbReference type="jPOST" id="Q9BY15"/>
<dbReference type="MassIVE" id="Q9BY15"/>
<dbReference type="PaxDb" id="9606-ENSP00000253673"/>
<dbReference type="PeptideAtlas" id="Q9BY15"/>
<dbReference type="ProteomicsDB" id="79565">
    <molecule id="Q9BY15-1"/>
</dbReference>
<dbReference type="ProteomicsDB" id="79566">
    <molecule id="Q9BY15-2"/>
</dbReference>
<dbReference type="Antibodypedia" id="2861">
    <property type="antibodies" value="352 antibodies from 31 providers"/>
</dbReference>
<dbReference type="DNASU" id="84658"/>
<dbReference type="Ensembl" id="ENST00000253673.6">
    <molecule id="Q9BY15-1"/>
    <property type="protein sequence ID" value="ENSP00000253673.4"/>
    <property type="gene ID" value="ENSG00000131355.16"/>
</dbReference>
<dbReference type="Ensembl" id="ENST00000344373.8">
    <molecule id="Q9BY15-2"/>
    <property type="protein sequence ID" value="ENSP00000340758.4"/>
    <property type="gene ID" value="ENSG00000131355.16"/>
</dbReference>
<dbReference type="GeneID" id="84658"/>
<dbReference type="KEGG" id="hsa:84658"/>
<dbReference type="MANE-Select" id="ENST00000253673.6">
    <property type="protein sequence ID" value="ENSP00000253673.4"/>
    <property type="RefSeq nucleotide sequence ID" value="NM_032571.5"/>
    <property type="RefSeq protein sequence ID" value="NP_115960.2"/>
</dbReference>
<dbReference type="UCSC" id="uc002mzi.6">
    <molecule id="Q9BY15-1"/>
    <property type="organism name" value="human"/>
</dbReference>
<dbReference type="AGR" id="HGNC:23647"/>
<dbReference type="CTD" id="84658"/>
<dbReference type="DisGeNET" id="84658"/>
<dbReference type="GeneCards" id="ADGRE3"/>
<dbReference type="HGNC" id="HGNC:23647">
    <property type="gene designation" value="ADGRE3"/>
</dbReference>
<dbReference type="HPA" id="ENSG00000131355">
    <property type="expression patterns" value="Tissue enhanced (bone marrow, lymphoid tissue)"/>
</dbReference>
<dbReference type="MIM" id="606101">
    <property type="type" value="gene"/>
</dbReference>
<dbReference type="neXtProt" id="NX_Q9BY15"/>
<dbReference type="OpenTargets" id="ENSG00000131355"/>
<dbReference type="PharmGKB" id="PA134956879"/>
<dbReference type="VEuPathDB" id="HostDB:ENSG00000131355"/>
<dbReference type="eggNOG" id="KOG4193">
    <property type="taxonomic scope" value="Eukaryota"/>
</dbReference>
<dbReference type="GeneTree" id="ENSGT00940000163037"/>
<dbReference type="InParanoid" id="Q9BY15"/>
<dbReference type="OMA" id="NYSNMNR"/>
<dbReference type="OrthoDB" id="1100386at2759"/>
<dbReference type="PAN-GO" id="Q9BY15">
    <property type="GO annotations" value="3 GO annotations based on evolutionary models"/>
</dbReference>
<dbReference type="PhylomeDB" id="Q9BY15"/>
<dbReference type="TreeFam" id="TF316380"/>
<dbReference type="PathwayCommons" id="Q9BY15"/>
<dbReference type="Reactome" id="R-HSA-373080">
    <property type="pathway name" value="Class B/2 (Secretin family receptors)"/>
</dbReference>
<dbReference type="Reactome" id="R-HSA-6798695">
    <property type="pathway name" value="Neutrophil degranulation"/>
</dbReference>
<dbReference type="SignaLink" id="Q9BY15"/>
<dbReference type="BioGRID-ORCS" id="84658">
    <property type="hits" value="15 hits in 1146 CRISPR screens"/>
</dbReference>
<dbReference type="ChiTaRS" id="ADGRE3">
    <property type="organism name" value="human"/>
</dbReference>
<dbReference type="GeneWiki" id="EMR3"/>
<dbReference type="GenomeRNAi" id="84658"/>
<dbReference type="Pharos" id="Q9BY15">
    <property type="development level" value="Tbio"/>
</dbReference>
<dbReference type="PRO" id="PR:Q9BY15"/>
<dbReference type="Proteomes" id="UP000005640">
    <property type="component" value="Chromosome 19"/>
</dbReference>
<dbReference type="RNAct" id="Q9BY15">
    <property type="molecule type" value="protein"/>
</dbReference>
<dbReference type="Bgee" id="ENSG00000131355">
    <property type="expression patterns" value="Expressed in blood and 80 other cell types or tissues"/>
</dbReference>
<dbReference type="ExpressionAtlas" id="Q9BY15">
    <property type="expression patterns" value="baseline and differential"/>
</dbReference>
<dbReference type="GO" id="GO:0005576">
    <property type="term" value="C:extracellular region"/>
    <property type="evidence" value="ECO:0007669"/>
    <property type="project" value="UniProtKB-SubCell"/>
</dbReference>
<dbReference type="GO" id="GO:0101003">
    <property type="term" value="C:ficolin-1-rich granule membrane"/>
    <property type="evidence" value="ECO:0000304"/>
    <property type="project" value="Reactome"/>
</dbReference>
<dbReference type="GO" id="GO:0016020">
    <property type="term" value="C:membrane"/>
    <property type="evidence" value="ECO:0000304"/>
    <property type="project" value="GDB"/>
</dbReference>
<dbReference type="GO" id="GO:0005886">
    <property type="term" value="C:plasma membrane"/>
    <property type="evidence" value="ECO:0000318"/>
    <property type="project" value="GO_Central"/>
</dbReference>
<dbReference type="GO" id="GO:0030667">
    <property type="term" value="C:secretory granule membrane"/>
    <property type="evidence" value="ECO:0000304"/>
    <property type="project" value="Reactome"/>
</dbReference>
<dbReference type="GO" id="GO:0005509">
    <property type="term" value="F:calcium ion binding"/>
    <property type="evidence" value="ECO:0007669"/>
    <property type="project" value="InterPro"/>
</dbReference>
<dbReference type="GO" id="GO:0004930">
    <property type="term" value="F:G protein-coupled receptor activity"/>
    <property type="evidence" value="ECO:0000318"/>
    <property type="project" value="GO_Central"/>
</dbReference>
<dbReference type="GO" id="GO:0007189">
    <property type="term" value="P:adenylate cyclase-activating G protein-coupled receptor signaling pathway"/>
    <property type="evidence" value="ECO:0000318"/>
    <property type="project" value="GO_Central"/>
</dbReference>
<dbReference type="GO" id="GO:0007166">
    <property type="term" value="P:cell surface receptor signaling pathway"/>
    <property type="evidence" value="ECO:0007669"/>
    <property type="project" value="InterPro"/>
</dbReference>
<dbReference type="GO" id="GO:0007186">
    <property type="term" value="P:G protein-coupled receptor signaling pathway"/>
    <property type="evidence" value="ECO:0000304"/>
    <property type="project" value="GDB"/>
</dbReference>
<dbReference type="CDD" id="cd00054">
    <property type="entry name" value="EGF_CA"/>
    <property type="match status" value="1"/>
</dbReference>
<dbReference type="FunFam" id="2.10.25.10:FF:000177">
    <property type="entry name" value="Adhesion G protein-coupled receptor E2"/>
    <property type="match status" value="1"/>
</dbReference>
<dbReference type="FunFam" id="1.20.1070.10:FF:000054">
    <property type="entry name" value="Adhesion G protein-coupled receptor E3"/>
    <property type="match status" value="1"/>
</dbReference>
<dbReference type="FunFam" id="2.60.220.50:FF:000022">
    <property type="entry name" value="Adhesion G protein-coupled receptor E3"/>
    <property type="match status" value="1"/>
</dbReference>
<dbReference type="FunFam" id="2.10.25.10:FF:000038">
    <property type="entry name" value="Fibrillin 2"/>
    <property type="match status" value="1"/>
</dbReference>
<dbReference type="Gene3D" id="2.60.220.50">
    <property type="match status" value="1"/>
</dbReference>
<dbReference type="Gene3D" id="2.10.25.10">
    <property type="entry name" value="Laminin"/>
    <property type="match status" value="2"/>
</dbReference>
<dbReference type="Gene3D" id="1.20.1070.10">
    <property type="entry name" value="Rhodopsin 7-helix transmembrane proteins"/>
    <property type="match status" value="1"/>
</dbReference>
<dbReference type="InterPro" id="IPR001881">
    <property type="entry name" value="EGF-like_Ca-bd_dom"/>
</dbReference>
<dbReference type="InterPro" id="IPR000742">
    <property type="entry name" value="EGF-like_dom"/>
</dbReference>
<dbReference type="InterPro" id="IPR000152">
    <property type="entry name" value="EGF-type_Asp/Asn_hydroxyl_site"/>
</dbReference>
<dbReference type="InterPro" id="IPR018097">
    <property type="entry name" value="EGF_Ca-bd_CS"/>
</dbReference>
<dbReference type="InterPro" id="IPR057244">
    <property type="entry name" value="GAIN_B"/>
</dbReference>
<dbReference type="InterPro" id="IPR032471">
    <property type="entry name" value="GAIN_dom_N"/>
</dbReference>
<dbReference type="InterPro" id="IPR046338">
    <property type="entry name" value="GAIN_dom_sf"/>
</dbReference>
<dbReference type="InterPro" id="IPR017981">
    <property type="entry name" value="GPCR_2-like_7TM"/>
</dbReference>
<dbReference type="InterPro" id="IPR001740">
    <property type="entry name" value="GPCR_2_EMR1-like_rcpt"/>
</dbReference>
<dbReference type="InterPro" id="IPR000832">
    <property type="entry name" value="GPCR_2_secretin-like"/>
</dbReference>
<dbReference type="InterPro" id="IPR017983">
    <property type="entry name" value="GPCR_2_secretin-like_CS"/>
</dbReference>
<dbReference type="InterPro" id="IPR000203">
    <property type="entry name" value="GPS"/>
</dbReference>
<dbReference type="InterPro" id="IPR009030">
    <property type="entry name" value="Growth_fac_rcpt_cys_sf"/>
</dbReference>
<dbReference type="InterPro" id="IPR049883">
    <property type="entry name" value="NOTCH1_EGF-like"/>
</dbReference>
<dbReference type="PANTHER" id="PTHR12011:SF455">
    <property type="entry name" value="ADHESION G PROTEIN-COUPLED RECEPTOR E3"/>
    <property type="match status" value="1"/>
</dbReference>
<dbReference type="PANTHER" id="PTHR12011">
    <property type="entry name" value="ADHESION G-PROTEIN COUPLED RECEPTOR"/>
    <property type="match status" value="1"/>
</dbReference>
<dbReference type="Pfam" id="PF00002">
    <property type="entry name" value="7tm_2"/>
    <property type="match status" value="1"/>
</dbReference>
<dbReference type="Pfam" id="PF07645">
    <property type="entry name" value="EGF_CA"/>
    <property type="match status" value="1"/>
</dbReference>
<dbReference type="Pfam" id="PF16489">
    <property type="entry name" value="GAIN"/>
    <property type="match status" value="1"/>
</dbReference>
<dbReference type="Pfam" id="PF01825">
    <property type="entry name" value="GPS"/>
    <property type="match status" value="1"/>
</dbReference>
<dbReference type="PRINTS" id="PR01128">
    <property type="entry name" value="EMR1HORMONER"/>
</dbReference>
<dbReference type="PRINTS" id="PR00249">
    <property type="entry name" value="GPCRSECRETIN"/>
</dbReference>
<dbReference type="SMART" id="SM00181">
    <property type="entry name" value="EGF"/>
    <property type="match status" value="2"/>
</dbReference>
<dbReference type="SMART" id="SM00179">
    <property type="entry name" value="EGF_CA"/>
    <property type="match status" value="1"/>
</dbReference>
<dbReference type="SMART" id="SM00303">
    <property type="entry name" value="GPS"/>
    <property type="match status" value="1"/>
</dbReference>
<dbReference type="SUPFAM" id="SSF57196">
    <property type="entry name" value="EGF/Laminin"/>
    <property type="match status" value="1"/>
</dbReference>
<dbReference type="SUPFAM" id="SSF81321">
    <property type="entry name" value="Family A G protein-coupled receptor-like"/>
    <property type="match status" value="1"/>
</dbReference>
<dbReference type="SUPFAM" id="SSF57184">
    <property type="entry name" value="Growth factor receptor domain"/>
    <property type="match status" value="1"/>
</dbReference>
<dbReference type="PROSITE" id="PS00010">
    <property type="entry name" value="ASX_HYDROXYL"/>
    <property type="match status" value="1"/>
</dbReference>
<dbReference type="PROSITE" id="PS50026">
    <property type="entry name" value="EGF_3"/>
    <property type="match status" value="1"/>
</dbReference>
<dbReference type="PROSITE" id="PS01187">
    <property type="entry name" value="EGF_CA"/>
    <property type="match status" value="1"/>
</dbReference>
<dbReference type="PROSITE" id="PS00650">
    <property type="entry name" value="G_PROTEIN_RECEP_F2_2"/>
    <property type="match status" value="1"/>
</dbReference>
<dbReference type="PROSITE" id="PS50261">
    <property type="entry name" value="G_PROTEIN_RECEP_F2_4"/>
    <property type="match status" value="1"/>
</dbReference>
<dbReference type="PROSITE" id="PS50221">
    <property type="entry name" value="GAIN_B"/>
    <property type="match status" value="1"/>
</dbReference>